<organism>
    <name type="scientific">Gracilaria tenuistipitata var. liui</name>
    <name type="common">Red alga</name>
    <dbReference type="NCBI Taxonomy" id="285951"/>
    <lineage>
        <taxon>Eukaryota</taxon>
        <taxon>Rhodophyta</taxon>
        <taxon>Florideophyceae</taxon>
        <taxon>Rhodymeniophycidae</taxon>
        <taxon>Gracilariales</taxon>
        <taxon>Gracilariaceae</taxon>
        <taxon>Gracilaria</taxon>
        <taxon>Gracilaria tenuistipitata</taxon>
    </lineage>
</organism>
<proteinExistence type="inferred from homology"/>
<feature type="chain" id="PRO_0000167301" description="Small ribosomal subunit protein bS16c">
    <location>
        <begin position="1"/>
        <end position="78"/>
    </location>
</feature>
<keyword id="KW-0150">Chloroplast</keyword>
<keyword id="KW-0934">Plastid</keyword>
<keyword id="KW-0687">Ribonucleoprotein</keyword>
<keyword id="KW-0689">Ribosomal protein</keyword>
<name>RR16_GRATL</name>
<evidence type="ECO:0000255" key="1">
    <source>
        <dbReference type="HAMAP-Rule" id="MF_00385"/>
    </source>
</evidence>
<evidence type="ECO:0000305" key="2"/>
<sequence length="78" mass="9311">MLKIRLKRFGRKRQPSYRIIVIDSRKPRDGRPIEEIGFYSPLNNKSKINLIQVKKRIYQGAQPTKKVQQIISQFEKQN</sequence>
<accession>Q6B914</accession>
<dbReference type="EMBL" id="AY673996">
    <property type="protein sequence ID" value="AAT79621.1"/>
    <property type="molecule type" value="Genomic_DNA"/>
</dbReference>
<dbReference type="RefSeq" id="YP_063546.1">
    <property type="nucleotide sequence ID" value="NC_006137.1"/>
</dbReference>
<dbReference type="SMR" id="Q6B914"/>
<dbReference type="GeneID" id="2943987"/>
<dbReference type="GO" id="GO:0009507">
    <property type="term" value="C:chloroplast"/>
    <property type="evidence" value="ECO:0007669"/>
    <property type="project" value="UniProtKB-SubCell"/>
</dbReference>
<dbReference type="GO" id="GO:0005739">
    <property type="term" value="C:mitochondrion"/>
    <property type="evidence" value="ECO:0007669"/>
    <property type="project" value="GOC"/>
</dbReference>
<dbReference type="GO" id="GO:0015935">
    <property type="term" value="C:small ribosomal subunit"/>
    <property type="evidence" value="ECO:0007669"/>
    <property type="project" value="TreeGrafter"/>
</dbReference>
<dbReference type="GO" id="GO:0003735">
    <property type="term" value="F:structural constituent of ribosome"/>
    <property type="evidence" value="ECO:0007669"/>
    <property type="project" value="InterPro"/>
</dbReference>
<dbReference type="GO" id="GO:0032543">
    <property type="term" value="P:mitochondrial translation"/>
    <property type="evidence" value="ECO:0007669"/>
    <property type="project" value="TreeGrafter"/>
</dbReference>
<dbReference type="Gene3D" id="3.30.1320.10">
    <property type="match status" value="1"/>
</dbReference>
<dbReference type="HAMAP" id="MF_00385">
    <property type="entry name" value="Ribosomal_bS16"/>
    <property type="match status" value="1"/>
</dbReference>
<dbReference type="InterPro" id="IPR000307">
    <property type="entry name" value="Ribosomal_bS16"/>
</dbReference>
<dbReference type="InterPro" id="IPR020592">
    <property type="entry name" value="Ribosomal_bS16_CS"/>
</dbReference>
<dbReference type="InterPro" id="IPR023803">
    <property type="entry name" value="Ribosomal_bS16_dom_sf"/>
</dbReference>
<dbReference type="NCBIfam" id="TIGR00002">
    <property type="entry name" value="S16"/>
    <property type="match status" value="1"/>
</dbReference>
<dbReference type="PANTHER" id="PTHR12919">
    <property type="entry name" value="30S RIBOSOMAL PROTEIN S16"/>
    <property type="match status" value="1"/>
</dbReference>
<dbReference type="PANTHER" id="PTHR12919:SF20">
    <property type="entry name" value="SMALL RIBOSOMAL SUBUNIT PROTEIN BS16M"/>
    <property type="match status" value="1"/>
</dbReference>
<dbReference type="Pfam" id="PF00886">
    <property type="entry name" value="Ribosomal_S16"/>
    <property type="match status" value="1"/>
</dbReference>
<dbReference type="SUPFAM" id="SSF54565">
    <property type="entry name" value="Ribosomal protein S16"/>
    <property type="match status" value="1"/>
</dbReference>
<dbReference type="PROSITE" id="PS00732">
    <property type="entry name" value="RIBOSOMAL_S16"/>
    <property type="match status" value="1"/>
</dbReference>
<reference key="1">
    <citation type="journal article" date="2004" name="J. Mol. Evol.">
        <title>Comparative analysis of the complete plastid genome sequence of the red alga Gracilaria tenuistipitata var. liui provides insights into the evolution of rhodoplasts and their relationship to other plastids.</title>
        <authorList>
            <person name="Hagopian J.C."/>
            <person name="Reis M."/>
            <person name="Kitajima J.P."/>
            <person name="Bhattacharya D."/>
            <person name="de Oliveira M.C."/>
        </authorList>
    </citation>
    <scope>NUCLEOTIDE SEQUENCE [LARGE SCALE GENOMIC DNA]</scope>
</reference>
<gene>
    <name evidence="1" type="primary">rps16</name>
    <name type="ordered locus">Grc000040</name>
</gene>
<geneLocation type="chloroplast"/>
<protein>
    <recommendedName>
        <fullName evidence="1">Small ribosomal subunit protein bS16c</fullName>
    </recommendedName>
    <alternativeName>
        <fullName evidence="2">30S ribosomal protein S16, chloroplastic</fullName>
    </alternativeName>
</protein>
<comment type="subcellular location">
    <subcellularLocation>
        <location>Plastid</location>
        <location>Chloroplast</location>
    </subcellularLocation>
</comment>
<comment type="similarity">
    <text evidence="1">Belongs to the bacterial ribosomal protein bS16 family.</text>
</comment>